<sequence>MAKEFSRSQRVSQEMQKEIALILQREIKDPRVGMATVSGIELSRDLAYAKVFVTFLNVLTDNADPDTVKNGIKALQDASGYIRTLLGKAMRLRIVPELTFAYDNSLIEGMRMSNLVSNVIKNDVERQVNPGSDEEK</sequence>
<evidence type="ECO:0000255" key="1">
    <source>
        <dbReference type="HAMAP-Rule" id="MF_00003"/>
    </source>
</evidence>
<gene>
    <name evidence="1" type="primary">rbfA</name>
    <name type="ordered locus">YPTS_0511</name>
</gene>
<comment type="function">
    <text evidence="1">One of several proteins that assist in the late maturation steps of the functional core of the 30S ribosomal subunit. Associates with free 30S ribosomal subunits (but not with 30S subunits that are part of 70S ribosomes or polysomes). Required for efficient processing of 16S rRNA. May interact with the 5'-terminal helix region of 16S rRNA.</text>
</comment>
<comment type="subunit">
    <text evidence="1">Monomer. Binds 30S ribosomal subunits, but not 50S ribosomal subunits or 70S ribosomes.</text>
</comment>
<comment type="subcellular location">
    <subcellularLocation>
        <location evidence="1">Cytoplasm</location>
    </subcellularLocation>
</comment>
<comment type="similarity">
    <text evidence="1">Belongs to the RbfA family.</text>
</comment>
<dbReference type="EMBL" id="CP001048">
    <property type="protein sequence ID" value="ACC87497.1"/>
    <property type="molecule type" value="Genomic_DNA"/>
</dbReference>
<dbReference type="RefSeq" id="WP_002209255.1">
    <property type="nucleotide sequence ID" value="NZ_CP009780.1"/>
</dbReference>
<dbReference type="SMR" id="B2K2Q6"/>
<dbReference type="GeneID" id="96663988"/>
<dbReference type="KEGG" id="ypb:YPTS_0511"/>
<dbReference type="PATRIC" id="fig|502801.10.peg.4185"/>
<dbReference type="GO" id="GO:0005829">
    <property type="term" value="C:cytosol"/>
    <property type="evidence" value="ECO:0007669"/>
    <property type="project" value="TreeGrafter"/>
</dbReference>
<dbReference type="GO" id="GO:0043024">
    <property type="term" value="F:ribosomal small subunit binding"/>
    <property type="evidence" value="ECO:0007669"/>
    <property type="project" value="TreeGrafter"/>
</dbReference>
<dbReference type="GO" id="GO:0030490">
    <property type="term" value="P:maturation of SSU-rRNA"/>
    <property type="evidence" value="ECO:0007669"/>
    <property type="project" value="UniProtKB-UniRule"/>
</dbReference>
<dbReference type="FunFam" id="3.30.300.20:FF:000007">
    <property type="entry name" value="Ribosome-binding factor A"/>
    <property type="match status" value="1"/>
</dbReference>
<dbReference type="Gene3D" id="3.30.300.20">
    <property type="match status" value="1"/>
</dbReference>
<dbReference type="HAMAP" id="MF_00003">
    <property type="entry name" value="RbfA"/>
    <property type="match status" value="1"/>
</dbReference>
<dbReference type="InterPro" id="IPR015946">
    <property type="entry name" value="KH_dom-like_a/b"/>
</dbReference>
<dbReference type="InterPro" id="IPR000238">
    <property type="entry name" value="RbfA"/>
</dbReference>
<dbReference type="InterPro" id="IPR023799">
    <property type="entry name" value="RbfA_dom_sf"/>
</dbReference>
<dbReference type="InterPro" id="IPR020053">
    <property type="entry name" value="Ribosome-bd_factorA_CS"/>
</dbReference>
<dbReference type="NCBIfam" id="TIGR00082">
    <property type="entry name" value="rbfA"/>
    <property type="match status" value="1"/>
</dbReference>
<dbReference type="PANTHER" id="PTHR33515">
    <property type="entry name" value="RIBOSOME-BINDING FACTOR A, CHLOROPLASTIC-RELATED"/>
    <property type="match status" value="1"/>
</dbReference>
<dbReference type="PANTHER" id="PTHR33515:SF1">
    <property type="entry name" value="RIBOSOME-BINDING FACTOR A, CHLOROPLASTIC-RELATED"/>
    <property type="match status" value="1"/>
</dbReference>
<dbReference type="Pfam" id="PF02033">
    <property type="entry name" value="RBFA"/>
    <property type="match status" value="1"/>
</dbReference>
<dbReference type="SUPFAM" id="SSF89919">
    <property type="entry name" value="Ribosome-binding factor A, RbfA"/>
    <property type="match status" value="1"/>
</dbReference>
<dbReference type="PROSITE" id="PS01319">
    <property type="entry name" value="RBFA"/>
    <property type="match status" value="1"/>
</dbReference>
<accession>B2K2Q6</accession>
<name>RBFA_YERPB</name>
<proteinExistence type="inferred from homology"/>
<organism>
    <name type="scientific">Yersinia pseudotuberculosis serotype IB (strain PB1/+)</name>
    <dbReference type="NCBI Taxonomy" id="502801"/>
    <lineage>
        <taxon>Bacteria</taxon>
        <taxon>Pseudomonadati</taxon>
        <taxon>Pseudomonadota</taxon>
        <taxon>Gammaproteobacteria</taxon>
        <taxon>Enterobacterales</taxon>
        <taxon>Yersiniaceae</taxon>
        <taxon>Yersinia</taxon>
    </lineage>
</organism>
<protein>
    <recommendedName>
        <fullName evidence="1">Ribosome-binding factor A</fullName>
    </recommendedName>
</protein>
<keyword id="KW-0963">Cytoplasm</keyword>
<keyword id="KW-0690">Ribosome biogenesis</keyword>
<feature type="chain" id="PRO_1000088947" description="Ribosome-binding factor A">
    <location>
        <begin position="1"/>
        <end position="136"/>
    </location>
</feature>
<reference key="1">
    <citation type="submission" date="2008-04" db="EMBL/GenBank/DDBJ databases">
        <title>Complete sequence of Yersinia pseudotuberculosis PB1/+.</title>
        <authorList>
            <person name="Copeland A."/>
            <person name="Lucas S."/>
            <person name="Lapidus A."/>
            <person name="Glavina del Rio T."/>
            <person name="Dalin E."/>
            <person name="Tice H."/>
            <person name="Bruce D."/>
            <person name="Goodwin L."/>
            <person name="Pitluck S."/>
            <person name="Munk A.C."/>
            <person name="Brettin T."/>
            <person name="Detter J.C."/>
            <person name="Han C."/>
            <person name="Tapia R."/>
            <person name="Schmutz J."/>
            <person name="Larimer F."/>
            <person name="Land M."/>
            <person name="Hauser L."/>
            <person name="Challacombe J.F."/>
            <person name="Green L."/>
            <person name="Lindler L.E."/>
            <person name="Nikolich M.P."/>
            <person name="Richardson P."/>
        </authorList>
    </citation>
    <scope>NUCLEOTIDE SEQUENCE [LARGE SCALE GENOMIC DNA]</scope>
    <source>
        <strain>PB1/+</strain>
    </source>
</reference>